<reference key="1">
    <citation type="journal article" date="2008" name="Environ. Microbiol.">
        <title>The complete genome sequence of Moorella thermoacetica (f. Clostridium thermoaceticum).</title>
        <authorList>
            <person name="Pierce E."/>
            <person name="Xie G."/>
            <person name="Barabote R.D."/>
            <person name="Saunders E."/>
            <person name="Han C.S."/>
            <person name="Detter J.C."/>
            <person name="Richardson P."/>
            <person name="Brettin T.S."/>
            <person name="Das A."/>
            <person name="Ljungdahl L.G."/>
            <person name="Ragsdale S.W."/>
        </authorList>
    </citation>
    <scope>NUCLEOTIDE SEQUENCE [LARGE SCALE GENOMIC DNA]</scope>
    <source>
        <strain>ATCC 39073 / JCM 9320</strain>
    </source>
</reference>
<evidence type="ECO:0000255" key="1">
    <source>
        <dbReference type="HAMAP-Rule" id="MF_00270"/>
    </source>
</evidence>
<evidence type="ECO:0000305" key="2"/>
<feature type="chain" id="PRO_0000345497" description="Small ribosomal subunit protein bS18">
    <location>
        <begin position="1"/>
        <end position="75"/>
    </location>
</feature>
<name>RS18_MOOTA</name>
<organism>
    <name type="scientific">Moorella thermoacetica (strain ATCC 39073 / JCM 9320)</name>
    <dbReference type="NCBI Taxonomy" id="264732"/>
    <lineage>
        <taxon>Bacteria</taxon>
        <taxon>Bacillati</taxon>
        <taxon>Bacillota</taxon>
        <taxon>Clostridia</taxon>
        <taxon>Moorellales</taxon>
        <taxon>Moorellaceae</taxon>
        <taxon>Moorella</taxon>
    </lineage>
</organism>
<sequence>MRRDKKRSRKRVCSFCVDKIEQVDYKDVNRLRRYISERGKILPRRISGNCAHHQRQLTRAIKRARALALLPYTAE</sequence>
<comment type="function">
    <text evidence="1">Binds as a heterodimer with protein bS6 to the central domain of the 16S rRNA, where it helps stabilize the platform of the 30S subunit.</text>
</comment>
<comment type="subunit">
    <text evidence="1">Part of the 30S ribosomal subunit. Forms a tight heterodimer with protein bS6.</text>
</comment>
<comment type="similarity">
    <text evidence="1">Belongs to the bacterial ribosomal protein bS18 family.</text>
</comment>
<gene>
    <name evidence="1" type="primary">rpsR</name>
    <name type="ordered locus">Moth_0130</name>
</gene>
<accession>Q2RM70</accession>
<dbReference type="EMBL" id="CP000232">
    <property type="protein sequence ID" value="ABC18469.1"/>
    <property type="molecule type" value="Genomic_DNA"/>
</dbReference>
<dbReference type="RefSeq" id="YP_429012.1">
    <property type="nucleotide sequence ID" value="NC_007644.1"/>
</dbReference>
<dbReference type="SMR" id="Q2RM70"/>
<dbReference type="STRING" id="264732.Moth_0130"/>
<dbReference type="EnsemblBacteria" id="ABC18469">
    <property type="protein sequence ID" value="ABC18469"/>
    <property type="gene ID" value="Moth_0130"/>
</dbReference>
<dbReference type="KEGG" id="mta:Moth_0130"/>
<dbReference type="PATRIC" id="fig|264732.11.peg.135"/>
<dbReference type="eggNOG" id="COG0238">
    <property type="taxonomic scope" value="Bacteria"/>
</dbReference>
<dbReference type="HOGENOM" id="CLU_148710_2_2_9"/>
<dbReference type="OrthoDB" id="9812008at2"/>
<dbReference type="GO" id="GO:0022627">
    <property type="term" value="C:cytosolic small ribosomal subunit"/>
    <property type="evidence" value="ECO:0007669"/>
    <property type="project" value="TreeGrafter"/>
</dbReference>
<dbReference type="GO" id="GO:0070181">
    <property type="term" value="F:small ribosomal subunit rRNA binding"/>
    <property type="evidence" value="ECO:0007669"/>
    <property type="project" value="TreeGrafter"/>
</dbReference>
<dbReference type="GO" id="GO:0003735">
    <property type="term" value="F:structural constituent of ribosome"/>
    <property type="evidence" value="ECO:0007669"/>
    <property type="project" value="InterPro"/>
</dbReference>
<dbReference type="GO" id="GO:0006412">
    <property type="term" value="P:translation"/>
    <property type="evidence" value="ECO:0007669"/>
    <property type="project" value="UniProtKB-UniRule"/>
</dbReference>
<dbReference type="FunFam" id="4.10.640.10:FF:000004">
    <property type="entry name" value="30S ribosomal protein S18"/>
    <property type="match status" value="1"/>
</dbReference>
<dbReference type="Gene3D" id="4.10.640.10">
    <property type="entry name" value="Ribosomal protein S18"/>
    <property type="match status" value="1"/>
</dbReference>
<dbReference type="HAMAP" id="MF_00270">
    <property type="entry name" value="Ribosomal_bS18"/>
    <property type="match status" value="1"/>
</dbReference>
<dbReference type="InterPro" id="IPR001648">
    <property type="entry name" value="Ribosomal_bS18"/>
</dbReference>
<dbReference type="InterPro" id="IPR018275">
    <property type="entry name" value="Ribosomal_bS18_CS"/>
</dbReference>
<dbReference type="InterPro" id="IPR036870">
    <property type="entry name" value="Ribosomal_bS18_sf"/>
</dbReference>
<dbReference type="NCBIfam" id="TIGR00165">
    <property type="entry name" value="S18"/>
    <property type="match status" value="1"/>
</dbReference>
<dbReference type="PANTHER" id="PTHR13479">
    <property type="entry name" value="30S RIBOSOMAL PROTEIN S18"/>
    <property type="match status" value="1"/>
</dbReference>
<dbReference type="PANTHER" id="PTHR13479:SF40">
    <property type="entry name" value="SMALL RIBOSOMAL SUBUNIT PROTEIN BS18M"/>
    <property type="match status" value="1"/>
</dbReference>
<dbReference type="Pfam" id="PF01084">
    <property type="entry name" value="Ribosomal_S18"/>
    <property type="match status" value="1"/>
</dbReference>
<dbReference type="PRINTS" id="PR00974">
    <property type="entry name" value="RIBOSOMALS18"/>
</dbReference>
<dbReference type="SUPFAM" id="SSF46911">
    <property type="entry name" value="Ribosomal protein S18"/>
    <property type="match status" value="1"/>
</dbReference>
<dbReference type="PROSITE" id="PS00057">
    <property type="entry name" value="RIBOSOMAL_S18"/>
    <property type="match status" value="1"/>
</dbReference>
<keyword id="KW-0687">Ribonucleoprotein</keyword>
<keyword id="KW-0689">Ribosomal protein</keyword>
<keyword id="KW-0694">RNA-binding</keyword>
<keyword id="KW-0699">rRNA-binding</keyword>
<proteinExistence type="inferred from homology"/>
<protein>
    <recommendedName>
        <fullName evidence="1">Small ribosomal subunit protein bS18</fullName>
    </recommendedName>
    <alternativeName>
        <fullName evidence="2">30S ribosomal protein S18</fullName>
    </alternativeName>
</protein>